<organism>
    <name type="scientific">Thermus thermophilus (strain ATCC BAA-163 / DSM 7039 / HB27)</name>
    <dbReference type="NCBI Taxonomy" id="262724"/>
    <lineage>
        <taxon>Bacteria</taxon>
        <taxon>Thermotogati</taxon>
        <taxon>Deinococcota</taxon>
        <taxon>Deinococci</taxon>
        <taxon>Thermales</taxon>
        <taxon>Thermaceae</taxon>
        <taxon>Thermus</taxon>
    </lineage>
</organism>
<sequence>MPRLVALVKGRVQGVGYRAFAQKKALELGLSGYAENLPDGRVEVVAEGPKEALELFLHHLKQGPRLARVEAVEVQWGEEAGLKGFHVY</sequence>
<keyword id="KW-0378">Hydrolase</keyword>
<evidence type="ECO:0000255" key="1">
    <source>
        <dbReference type="PROSITE-ProRule" id="PRU00520"/>
    </source>
</evidence>
<evidence type="ECO:0000305" key="2"/>
<reference key="1">
    <citation type="journal article" date="2004" name="Nat. Biotechnol.">
        <title>The genome sequence of the extreme thermophile Thermus thermophilus.</title>
        <authorList>
            <person name="Henne A."/>
            <person name="Brueggemann H."/>
            <person name="Raasch C."/>
            <person name="Wiezer A."/>
            <person name="Hartsch T."/>
            <person name="Liesegang H."/>
            <person name="Johann A."/>
            <person name="Lienard T."/>
            <person name="Gohl O."/>
            <person name="Martinez-Arias R."/>
            <person name="Jacobi C."/>
            <person name="Starkuviene V."/>
            <person name="Schlenczeck S."/>
            <person name="Dencker S."/>
            <person name="Huber R."/>
            <person name="Klenk H.-P."/>
            <person name="Kramer W."/>
            <person name="Merkl R."/>
            <person name="Gottschalk G."/>
            <person name="Fritz H.-J."/>
        </authorList>
    </citation>
    <scope>NUCLEOTIDE SEQUENCE [LARGE SCALE GENOMIC DNA]</scope>
    <source>
        <strain>ATCC BAA-163 / DSM 7039 / HB27</strain>
    </source>
</reference>
<comment type="catalytic activity">
    <reaction>
        <text>an acyl phosphate + H2O = a carboxylate + phosphate + H(+)</text>
        <dbReference type="Rhea" id="RHEA:14965"/>
        <dbReference type="ChEBI" id="CHEBI:15377"/>
        <dbReference type="ChEBI" id="CHEBI:15378"/>
        <dbReference type="ChEBI" id="CHEBI:29067"/>
        <dbReference type="ChEBI" id="CHEBI:43474"/>
        <dbReference type="ChEBI" id="CHEBI:59918"/>
        <dbReference type="EC" id="3.6.1.7"/>
    </reaction>
</comment>
<comment type="similarity">
    <text evidence="2">Belongs to the acylphosphatase family.</text>
</comment>
<gene>
    <name type="primary">acyP</name>
    <name type="ordered locus">TT_C0199</name>
</gene>
<dbReference type="EC" id="3.6.1.7"/>
<dbReference type="EMBL" id="AE017221">
    <property type="protein sequence ID" value="AAS80547.1"/>
    <property type="molecule type" value="Genomic_DNA"/>
</dbReference>
<dbReference type="RefSeq" id="WP_008631905.1">
    <property type="nucleotide sequence ID" value="NC_005835.1"/>
</dbReference>
<dbReference type="SMR" id="Q72L64"/>
<dbReference type="GeneID" id="3170007"/>
<dbReference type="KEGG" id="tth:TT_C0199"/>
<dbReference type="eggNOG" id="COG1254">
    <property type="taxonomic scope" value="Bacteria"/>
</dbReference>
<dbReference type="HOGENOM" id="CLU_141932_2_1_0"/>
<dbReference type="OrthoDB" id="9808093at2"/>
<dbReference type="Proteomes" id="UP000000592">
    <property type="component" value="Chromosome"/>
</dbReference>
<dbReference type="GO" id="GO:0003998">
    <property type="term" value="F:acylphosphatase activity"/>
    <property type="evidence" value="ECO:0007669"/>
    <property type="project" value="UniProtKB-EC"/>
</dbReference>
<dbReference type="Gene3D" id="3.30.70.100">
    <property type="match status" value="1"/>
</dbReference>
<dbReference type="InterPro" id="IPR020456">
    <property type="entry name" value="Acylphosphatase"/>
</dbReference>
<dbReference type="InterPro" id="IPR001792">
    <property type="entry name" value="Acylphosphatase-like_dom"/>
</dbReference>
<dbReference type="InterPro" id="IPR036046">
    <property type="entry name" value="Acylphosphatase-like_dom_sf"/>
</dbReference>
<dbReference type="NCBIfam" id="NF011007">
    <property type="entry name" value="PRK14433.1"/>
    <property type="match status" value="1"/>
</dbReference>
<dbReference type="PANTHER" id="PTHR47268">
    <property type="entry name" value="ACYLPHOSPHATASE"/>
    <property type="match status" value="1"/>
</dbReference>
<dbReference type="PANTHER" id="PTHR47268:SF4">
    <property type="entry name" value="ACYLPHOSPHATASE"/>
    <property type="match status" value="1"/>
</dbReference>
<dbReference type="Pfam" id="PF00708">
    <property type="entry name" value="Acylphosphatase"/>
    <property type="match status" value="1"/>
</dbReference>
<dbReference type="SUPFAM" id="SSF54975">
    <property type="entry name" value="Acylphosphatase/BLUF domain-like"/>
    <property type="match status" value="1"/>
</dbReference>
<dbReference type="PROSITE" id="PS51160">
    <property type="entry name" value="ACYLPHOSPHATASE_3"/>
    <property type="match status" value="1"/>
</dbReference>
<proteinExistence type="inferred from homology"/>
<accession>Q72L64</accession>
<feature type="chain" id="PRO_0000326835" description="Acylphosphatase">
    <location>
        <begin position="1"/>
        <end position="88"/>
    </location>
</feature>
<feature type="domain" description="Acylphosphatase-like" evidence="1">
    <location>
        <begin position="3"/>
        <end position="88"/>
    </location>
</feature>
<feature type="active site" evidence="1">
    <location>
        <position position="18"/>
    </location>
</feature>
<feature type="active site" evidence="1">
    <location>
        <position position="36"/>
    </location>
</feature>
<protein>
    <recommendedName>
        <fullName>Acylphosphatase</fullName>
        <ecNumber>3.6.1.7</ecNumber>
    </recommendedName>
    <alternativeName>
        <fullName>Acylphosphate phosphohydrolase</fullName>
    </alternativeName>
</protein>
<name>ACYP_THET2</name>